<keyword id="KW-0256">Endoplasmic reticulum</keyword>
<keyword id="KW-0445">Lipid transport</keyword>
<keyword id="KW-0446">Lipid-binding</keyword>
<keyword id="KW-0472">Membrane</keyword>
<keyword id="KW-0812">Transmembrane</keyword>
<keyword id="KW-1133">Transmembrane helix</keyword>
<keyword id="KW-0813">Transport</keyword>
<feature type="chain" id="PRO_0000384209" description="Maintenance of mitochondrial morphology protein 1">
    <location>
        <begin position="1"/>
        <end position="536"/>
    </location>
</feature>
<feature type="topological domain" description="Lumenal" evidence="1">
    <location>
        <begin position="1"/>
        <end position="25"/>
    </location>
</feature>
<feature type="transmembrane region" description="Helical" evidence="1">
    <location>
        <begin position="26"/>
        <end position="46"/>
    </location>
</feature>
<feature type="topological domain" description="Cytoplasmic" evidence="1">
    <location>
        <begin position="47"/>
        <end position="536"/>
    </location>
</feature>
<feature type="domain" description="SMP-LTD" evidence="1">
    <location>
        <begin position="134"/>
        <end position="409"/>
    </location>
</feature>
<feature type="region of interest" description="Disordered" evidence="2">
    <location>
        <begin position="52"/>
        <end position="135"/>
    </location>
</feature>
<feature type="region of interest" description="Disordered" evidence="2">
    <location>
        <begin position="275"/>
        <end position="331"/>
    </location>
</feature>
<feature type="region of interest" description="Disordered" evidence="2">
    <location>
        <begin position="416"/>
        <end position="467"/>
    </location>
</feature>
<feature type="region of interest" description="Disordered" evidence="2">
    <location>
        <begin position="505"/>
        <end position="536"/>
    </location>
</feature>
<feature type="compositionally biased region" description="Polar residues" evidence="2">
    <location>
        <begin position="69"/>
        <end position="81"/>
    </location>
</feature>
<feature type="compositionally biased region" description="Polar residues" evidence="2">
    <location>
        <begin position="88"/>
        <end position="105"/>
    </location>
</feature>
<feature type="compositionally biased region" description="Polar residues" evidence="2">
    <location>
        <begin position="112"/>
        <end position="121"/>
    </location>
</feature>
<feature type="compositionally biased region" description="Basic residues" evidence="2">
    <location>
        <begin position="122"/>
        <end position="132"/>
    </location>
</feature>
<feature type="compositionally biased region" description="Low complexity" evidence="2">
    <location>
        <begin position="321"/>
        <end position="331"/>
    </location>
</feature>
<feature type="compositionally biased region" description="Gly residues" evidence="2">
    <location>
        <begin position="442"/>
        <end position="467"/>
    </location>
</feature>
<feature type="compositionally biased region" description="Gly residues" evidence="2">
    <location>
        <begin position="507"/>
        <end position="517"/>
    </location>
</feature>
<comment type="function">
    <text evidence="1">Component of the ERMES/MDM complex, which serves as a molecular tether to connect the endoplasmic reticulum (ER) and mitochondria. Components of this complex are involved in the control of mitochondrial shape and protein biogenesis, and function in nonvesicular lipid trafficking between the ER and mitochondria. The MDM12-MMM1 subcomplex functions in the major beta-barrel assembly pathway that is responsible for biogenesis of all outer membrane beta-barrel proteins, and acts in a late step after the SAM complex. The MDM10-MDM12-MMM1 subcomplex further acts in the TOM40-specific pathway after the action of the MDM12-MMM1 complex. Essential for establishing and maintaining the structure of mitochondria and maintenance of mtDNA nucleoids.</text>
</comment>
<comment type="subunit">
    <text evidence="1">Homodimer. Component of the ER-mitochondria encounter structure (ERMES) or MDM complex, composed of MMM1, MDM10, MDM12 and MDM34. A MMM1 homodimer associates with one molecule of MDM12 on each side in a pairwise head-to-tail manner, and the SMP-LTD domains of MMM1 and MDM12 generate a continuous hydrophobic tunnel for phospholipid trafficking.</text>
</comment>
<comment type="subcellular location">
    <subcellularLocation>
        <location evidence="1">Endoplasmic reticulum membrane</location>
        <topology evidence="1">Single-pass type I membrane protein</topology>
    </subcellularLocation>
    <text evidence="1">The ERMES/MDM complex localizes to a few discrete foci (around 10 per single cell), that represent mitochondria-endoplasmic reticulum junctions. These foci are often found next to mtDNA nucleoids.</text>
</comment>
<comment type="domain">
    <text evidence="1">The SMP-LTD domain is a barrel-like domain that can bind various types of glycerophospholipids in its interior and mediate their transfer between two adjacent bilayers.</text>
</comment>
<comment type="similarity">
    <text evidence="1">Belongs to the MMM1 family.</text>
</comment>
<reference key="1">
    <citation type="journal article" date="2015" name="PLoS Genet.">
        <title>The dynamic genome and transcriptome of the human fungal pathogen Blastomyces and close relative Emmonsia.</title>
        <authorList>
            <person name="Munoz J.F."/>
            <person name="Gauthier G.M."/>
            <person name="Desjardins C.A."/>
            <person name="Gallo J.E."/>
            <person name="Holder J."/>
            <person name="Sullivan T.D."/>
            <person name="Marty A.J."/>
            <person name="Carmen J.C."/>
            <person name="Chen Z."/>
            <person name="Ding L."/>
            <person name="Gujja S."/>
            <person name="Magrini V."/>
            <person name="Misas E."/>
            <person name="Mitreva M."/>
            <person name="Priest M."/>
            <person name="Saif S."/>
            <person name="Whiston E.A."/>
            <person name="Young S."/>
            <person name="Zeng Q."/>
            <person name="Goldman W.E."/>
            <person name="Mardis E.R."/>
            <person name="Taylor J.W."/>
            <person name="McEwen J.G."/>
            <person name="Clay O.K."/>
            <person name="Klein B.S."/>
            <person name="Cuomo C.A."/>
        </authorList>
    </citation>
    <scope>NUCLEOTIDE SEQUENCE [LARGE SCALE GENOMIC DNA]</scope>
    <source>
        <strain>ER-3 / ATCC MYA-2586</strain>
    </source>
</reference>
<gene>
    <name evidence="1" type="primary">MMM1</name>
    <name type="ORF">BDCG_05272</name>
</gene>
<dbReference type="EMBL" id="EQ999977">
    <property type="protein sequence ID" value="EEQ90152.2"/>
    <property type="molecule type" value="Genomic_DNA"/>
</dbReference>
<dbReference type="SMR" id="C5GLP2"/>
<dbReference type="STRING" id="559297.C5GLP2"/>
<dbReference type="eggNOG" id="ENOG502QUUW">
    <property type="taxonomic scope" value="Eukaryota"/>
</dbReference>
<dbReference type="HOGENOM" id="CLU_032730_2_0_1"/>
<dbReference type="OMA" id="NIWPRMG"/>
<dbReference type="GO" id="GO:0005789">
    <property type="term" value="C:endoplasmic reticulum membrane"/>
    <property type="evidence" value="ECO:0007669"/>
    <property type="project" value="UniProtKB-SubCell"/>
</dbReference>
<dbReference type="GO" id="GO:0032865">
    <property type="term" value="C:ERMES complex"/>
    <property type="evidence" value="ECO:0007669"/>
    <property type="project" value="UniProtKB-UniRule"/>
</dbReference>
<dbReference type="GO" id="GO:0008289">
    <property type="term" value="F:lipid binding"/>
    <property type="evidence" value="ECO:0007669"/>
    <property type="project" value="UniProtKB-KW"/>
</dbReference>
<dbReference type="GO" id="GO:0000002">
    <property type="term" value="P:mitochondrial genome maintenance"/>
    <property type="evidence" value="ECO:0007669"/>
    <property type="project" value="UniProtKB-UniRule"/>
</dbReference>
<dbReference type="GO" id="GO:1990456">
    <property type="term" value="P:mitochondrion-endoplasmic reticulum membrane tethering"/>
    <property type="evidence" value="ECO:0007669"/>
    <property type="project" value="TreeGrafter"/>
</dbReference>
<dbReference type="GO" id="GO:0015914">
    <property type="term" value="P:phospholipid transport"/>
    <property type="evidence" value="ECO:0007669"/>
    <property type="project" value="TreeGrafter"/>
</dbReference>
<dbReference type="GO" id="GO:0045040">
    <property type="term" value="P:protein insertion into mitochondrial outer membrane"/>
    <property type="evidence" value="ECO:0007669"/>
    <property type="project" value="UniProtKB-UniRule"/>
</dbReference>
<dbReference type="CDD" id="cd21671">
    <property type="entry name" value="SMP_Mmm1"/>
    <property type="match status" value="1"/>
</dbReference>
<dbReference type="HAMAP" id="MF_03103">
    <property type="entry name" value="Mmm1"/>
    <property type="match status" value="1"/>
</dbReference>
<dbReference type="InterPro" id="IPR027537">
    <property type="entry name" value="Mmm1"/>
</dbReference>
<dbReference type="InterPro" id="IPR019411">
    <property type="entry name" value="MMM1_dom"/>
</dbReference>
<dbReference type="InterPro" id="IPR031468">
    <property type="entry name" value="SMP_LBD"/>
</dbReference>
<dbReference type="PANTHER" id="PTHR13466:SF0">
    <property type="entry name" value="SMP-LTD DOMAIN-CONTAINING PROTEIN"/>
    <property type="match status" value="1"/>
</dbReference>
<dbReference type="PANTHER" id="PTHR13466">
    <property type="entry name" value="TEX2 PROTEIN-RELATED"/>
    <property type="match status" value="1"/>
</dbReference>
<dbReference type="Pfam" id="PF10296">
    <property type="entry name" value="MMM1"/>
    <property type="match status" value="1"/>
</dbReference>
<dbReference type="PROSITE" id="PS51847">
    <property type="entry name" value="SMP"/>
    <property type="match status" value="1"/>
</dbReference>
<name>MMM1_AJEDR</name>
<evidence type="ECO:0000255" key="1">
    <source>
        <dbReference type="HAMAP-Rule" id="MF_03103"/>
    </source>
</evidence>
<evidence type="ECO:0000256" key="2">
    <source>
        <dbReference type="SAM" id="MobiDB-lite"/>
    </source>
</evidence>
<organism>
    <name type="scientific">Ajellomyces dermatitidis (strain ER-3 / ATCC MYA-2586)</name>
    <name type="common">Blastomyces dermatitidis</name>
    <dbReference type="NCBI Taxonomy" id="559297"/>
    <lineage>
        <taxon>Eukaryota</taxon>
        <taxon>Fungi</taxon>
        <taxon>Dikarya</taxon>
        <taxon>Ascomycota</taxon>
        <taxon>Pezizomycotina</taxon>
        <taxon>Eurotiomycetes</taxon>
        <taxon>Eurotiomycetidae</taxon>
        <taxon>Onygenales</taxon>
        <taxon>Ajellomycetaceae</taxon>
        <taxon>Blastomyces</taxon>
    </lineage>
</organism>
<sequence length="536" mass="56167">MAGPSNQTQPPPPVLTQPSLSFTQGLLVGQLSVVLLIGAFIKFFIFGEAPPHPSRNGLSNRTSSHRRSYSLNSISADSSPRTLREKPSTSNILRPVPSSSTNTRSILRKTYYSATPTNPTSKHSRSRPHHSSHQPESLDWFNVLIAQTIAQYRQTAYILKDSPTSSILASLSEALNNPEKKPSFIDSIKVTDISLGEEFPIFSNCRVIAVEDPNSDGGRLQALMDVDLSDDNLSLAVETSLLLNYPKPFSAVLPVALAVSVVRFSGTLCISFVPGPGTSDQTMSPSPSPPKEASAENIAVDHQSPERQSARQRAPHQHKYTNTNTAGATAAATADDNDTHAKLPHGIPKTSLAFSFLPDYRLDLSVRSLIGSRSRLQDVPKVAQLVEARVQAWFEERVVEPRVQVVGLPNIWPRMGRTGVRGSQEETEAGAGGSAPADIPGTAGGDGVGVRGGGGGGGVGGSGGGSMRGTSGWGMGYDGLRYRHNAHGDGGVGAGPGQSAGAALYGGAQGGGGGGGRGGEEQFAIPGSMPDPVVVT</sequence>
<proteinExistence type="inferred from homology"/>
<accession>C5GLP2</accession>
<protein>
    <recommendedName>
        <fullName evidence="1">Maintenance of mitochondrial morphology protein 1</fullName>
    </recommendedName>
</protein>